<evidence type="ECO:0000255" key="1">
    <source>
        <dbReference type="HAMAP-Rule" id="MF_00172"/>
    </source>
</evidence>
<comment type="function">
    <text evidence="1">Catalyzes the transfer of a methyl group from 5-methyltetrahydrofolate to homocysteine resulting in methionine formation.</text>
</comment>
<comment type="catalytic activity">
    <reaction evidence="1">
        <text>5-methyltetrahydropteroyltri-L-glutamate + L-homocysteine = tetrahydropteroyltri-L-glutamate + L-methionine</text>
        <dbReference type="Rhea" id="RHEA:21196"/>
        <dbReference type="ChEBI" id="CHEBI:57844"/>
        <dbReference type="ChEBI" id="CHEBI:58140"/>
        <dbReference type="ChEBI" id="CHEBI:58199"/>
        <dbReference type="ChEBI" id="CHEBI:58207"/>
        <dbReference type="EC" id="2.1.1.14"/>
    </reaction>
</comment>
<comment type="cofactor">
    <cofactor evidence="1">
        <name>Zn(2+)</name>
        <dbReference type="ChEBI" id="CHEBI:29105"/>
    </cofactor>
    <text evidence="1">Binds 1 zinc ion per subunit.</text>
</comment>
<comment type="pathway">
    <text evidence="1">Amino-acid biosynthesis; L-methionine biosynthesis via de novo pathway; L-methionine from L-homocysteine (MetE route): step 1/1.</text>
</comment>
<comment type="similarity">
    <text evidence="1">Belongs to the vitamin-B12 independent methionine synthase family.</text>
</comment>
<protein>
    <recommendedName>
        <fullName evidence="1">5-methyltetrahydropteroyltriglutamate--homocysteine methyltransferase</fullName>
        <ecNumber evidence="1">2.1.1.14</ecNumber>
    </recommendedName>
    <alternativeName>
        <fullName evidence="1">Cobalamin-independent methionine synthase</fullName>
    </alternativeName>
    <alternativeName>
        <fullName evidence="1">Methionine synthase, vitamin-B12 independent isozyme</fullName>
    </alternativeName>
</protein>
<feature type="chain" id="PRO_1000017278" description="5-methyltetrahydropteroyltriglutamate--homocysteine methyltransferase">
    <location>
        <begin position="1"/>
        <end position="742"/>
    </location>
</feature>
<feature type="active site" description="Proton donor" evidence="1">
    <location>
        <position position="683"/>
    </location>
</feature>
<feature type="binding site" evidence="1">
    <location>
        <begin position="18"/>
        <end position="21"/>
    </location>
    <ligand>
        <name>5-methyltetrahydropteroyltri-L-glutamate</name>
        <dbReference type="ChEBI" id="CHEBI:58207"/>
    </ligand>
</feature>
<feature type="binding site" evidence="1">
    <location>
        <position position="112"/>
    </location>
    <ligand>
        <name>5-methyltetrahydropteroyltri-L-glutamate</name>
        <dbReference type="ChEBI" id="CHEBI:58207"/>
    </ligand>
</feature>
<feature type="binding site" evidence="1">
    <location>
        <begin position="420"/>
        <end position="422"/>
    </location>
    <ligand>
        <name>L-homocysteine</name>
        <dbReference type="ChEBI" id="CHEBI:58199"/>
    </ligand>
</feature>
<feature type="binding site" evidence="1">
    <location>
        <begin position="420"/>
        <end position="422"/>
    </location>
    <ligand>
        <name>L-methionine</name>
        <dbReference type="ChEBI" id="CHEBI:57844"/>
    </ligand>
</feature>
<feature type="binding site" evidence="1">
    <location>
        <position position="473"/>
    </location>
    <ligand>
        <name>L-homocysteine</name>
        <dbReference type="ChEBI" id="CHEBI:58199"/>
    </ligand>
</feature>
<feature type="binding site" evidence="1">
    <location>
        <position position="473"/>
    </location>
    <ligand>
        <name>L-methionine</name>
        <dbReference type="ChEBI" id="CHEBI:57844"/>
    </ligand>
</feature>
<feature type="binding site" evidence="1">
    <location>
        <position position="550"/>
    </location>
    <ligand>
        <name>5-methyltetrahydropteroyltri-L-glutamate</name>
        <dbReference type="ChEBI" id="CHEBI:58207"/>
    </ligand>
</feature>
<feature type="binding site" evidence="1">
    <location>
        <position position="588"/>
    </location>
    <ligand>
        <name>L-homocysteine</name>
        <dbReference type="ChEBI" id="CHEBI:58199"/>
    </ligand>
</feature>
<feature type="binding site" evidence="1">
    <location>
        <position position="588"/>
    </location>
    <ligand>
        <name>L-methionine</name>
        <dbReference type="ChEBI" id="CHEBI:57844"/>
    </ligand>
</feature>
<feature type="binding site" evidence="1">
    <location>
        <position position="594"/>
    </location>
    <ligand>
        <name>5-methyltetrahydropteroyltri-L-glutamate</name>
        <dbReference type="ChEBI" id="CHEBI:58207"/>
    </ligand>
</feature>
<feature type="binding site" evidence="1">
    <location>
        <position position="630"/>
    </location>
    <ligand>
        <name>Zn(2+)</name>
        <dbReference type="ChEBI" id="CHEBI:29105"/>
        <note>catalytic</note>
    </ligand>
</feature>
<feature type="binding site" evidence="1">
    <location>
        <position position="632"/>
    </location>
    <ligand>
        <name>Zn(2+)</name>
        <dbReference type="ChEBI" id="CHEBI:29105"/>
        <note>catalytic</note>
    </ligand>
</feature>
<feature type="binding site" evidence="1">
    <location>
        <position position="654"/>
    </location>
    <ligand>
        <name>Zn(2+)</name>
        <dbReference type="ChEBI" id="CHEBI:29105"/>
        <note>catalytic</note>
    </ligand>
</feature>
<feature type="binding site" evidence="1">
    <location>
        <position position="715"/>
    </location>
    <ligand>
        <name>Zn(2+)</name>
        <dbReference type="ChEBI" id="CHEBI:29105"/>
        <note>catalytic</note>
    </ligand>
</feature>
<sequence>MTTIKTSNLGFPRLGRKREWKKAIESYWAKKISKEELDQTLTDLHKENLLLQKYYHLDSIPVGDFSLYDHILDTSLLFNIIPERFQGRTIDDDLLFDIARGNKDHVASALIKWFNTNYHYIVPEWDNVEPKVSRNVLLDRFKYAQSLNVNAHPVIVGPITFVKLSKGGHQTFEEKVKTLLPLYKEVFESLIDAGAEYIQVDEPILVTDDSESYENITREAYDYFEKAGVAKKLVIQTYFERAHLKFLSSLPVGGIGLDFVHDNGYNLKQIEAGDFDKSKTLYAGIIDGRNVWASDIEAKKVLIDKLLAHTNELVIQPSSSLLHVPVSLDDETLDTSVGEGLSFATEKLDELDALRRLFNQNDSVKYDKLKARYERFQNQSFKNLDYDFESVRTSRQSPFAQRIEQQQKRLNLPDLPTTTIGSFPQSREVRKYRADWKNKRITDEAYETFLKNEIARWIKIQEDIGLDVLVHGEFERNDMVEFFGEKLQGFLVTKFGWVQSYGSRAVKPPIIYGDVKWTAPLTVDETVYAQSLTDKPVKGMLTGPVTILNWSFERVDLPRKVVQDQIALAINEEVLALEAAGIKVIQVDEPALREGLPLRSEYHEQYLKDAVLSFKLATSSVRDETQIHTHMCYSQFGQIIHAIHDLDADVISIETSRSHGDLIKDFEDINYDLGIGLGVYDIHSPRIPTKEEITTAINRSLQQIDRSLFWVNPDCGLKTRKEEEVKDALTVLVNAVKAKRQE</sequence>
<reference key="1">
    <citation type="journal article" date="2006" name="Lancet">
        <title>Complete genome sequence of USA300, an epidemic clone of community-acquired meticillin-resistant Staphylococcus aureus.</title>
        <authorList>
            <person name="Diep B.A."/>
            <person name="Gill S.R."/>
            <person name="Chang R.F."/>
            <person name="Phan T.H."/>
            <person name="Chen J.H."/>
            <person name="Davidson M.G."/>
            <person name="Lin F."/>
            <person name="Lin J."/>
            <person name="Carleton H.A."/>
            <person name="Mongodin E.F."/>
            <person name="Sensabaugh G.F."/>
            <person name="Perdreau-Remington F."/>
        </authorList>
    </citation>
    <scope>NUCLEOTIDE SEQUENCE [LARGE SCALE GENOMIC DNA]</scope>
    <source>
        <strain>USA300</strain>
    </source>
</reference>
<organism>
    <name type="scientific">Staphylococcus aureus (strain USA300)</name>
    <dbReference type="NCBI Taxonomy" id="367830"/>
    <lineage>
        <taxon>Bacteria</taxon>
        <taxon>Bacillati</taxon>
        <taxon>Bacillota</taxon>
        <taxon>Bacilli</taxon>
        <taxon>Bacillales</taxon>
        <taxon>Staphylococcaceae</taxon>
        <taxon>Staphylococcus</taxon>
    </lineage>
</organism>
<name>METE_STAA3</name>
<gene>
    <name evidence="1" type="primary">metE</name>
    <name type="ordered locus">SAUSA300_0357</name>
</gene>
<keyword id="KW-0028">Amino-acid biosynthesis</keyword>
<keyword id="KW-0479">Metal-binding</keyword>
<keyword id="KW-0486">Methionine biosynthesis</keyword>
<keyword id="KW-0489">Methyltransferase</keyword>
<keyword id="KW-0677">Repeat</keyword>
<keyword id="KW-0808">Transferase</keyword>
<keyword id="KW-0862">Zinc</keyword>
<dbReference type="EC" id="2.1.1.14" evidence="1"/>
<dbReference type="EMBL" id="CP000255">
    <property type="protein sequence ID" value="ABD21454.1"/>
    <property type="molecule type" value="Genomic_DNA"/>
</dbReference>
<dbReference type="RefSeq" id="WP_000207614.1">
    <property type="nucleotide sequence ID" value="NZ_CP027476.1"/>
</dbReference>
<dbReference type="SMR" id="Q2FJQ7"/>
<dbReference type="KEGG" id="saa:SAUSA300_0357"/>
<dbReference type="HOGENOM" id="CLU_013175_0_0_9"/>
<dbReference type="OMA" id="KVMKGML"/>
<dbReference type="UniPathway" id="UPA00051">
    <property type="reaction ID" value="UER00082"/>
</dbReference>
<dbReference type="Proteomes" id="UP000001939">
    <property type="component" value="Chromosome"/>
</dbReference>
<dbReference type="GO" id="GO:0003871">
    <property type="term" value="F:5-methyltetrahydropteroyltriglutamate-homocysteine S-methyltransferase activity"/>
    <property type="evidence" value="ECO:0007669"/>
    <property type="project" value="UniProtKB-UniRule"/>
</dbReference>
<dbReference type="GO" id="GO:0008270">
    <property type="term" value="F:zinc ion binding"/>
    <property type="evidence" value="ECO:0007669"/>
    <property type="project" value="InterPro"/>
</dbReference>
<dbReference type="GO" id="GO:0009086">
    <property type="term" value="P:methionine biosynthetic process"/>
    <property type="evidence" value="ECO:0007669"/>
    <property type="project" value="UniProtKB-UniRule"/>
</dbReference>
<dbReference type="GO" id="GO:0032259">
    <property type="term" value="P:methylation"/>
    <property type="evidence" value="ECO:0007669"/>
    <property type="project" value="UniProtKB-KW"/>
</dbReference>
<dbReference type="CDD" id="cd03311">
    <property type="entry name" value="CIMS_C_terminal_like"/>
    <property type="match status" value="1"/>
</dbReference>
<dbReference type="CDD" id="cd03312">
    <property type="entry name" value="CIMS_N_terminal_like"/>
    <property type="match status" value="1"/>
</dbReference>
<dbReference type="Gene3D" id="3.20.20.210">
    <property type="match status" value="2"/>
</dbReference>
<dbReference type="HAMAP" id="MF_00172">
    <property type="entry name" value="Meth_synth"/>
    <property type="match status" value="1"/>
</dbReference>
<dbReference type="InterPro" id="IPR013215">
    <property type="entry name" value="Cbl-indep_Met_Synth_N"/>
</dbReference>
<dbReference type="InterPro" id="IPR006276">
    <property type="entry name" value="Cobalamin-indep_Met_synthase"/>
</dbReference>
<dbReference type="InterPro" id="IPR002629">
    <property type="entry name" value="Met_Synth_C/arc"/>
</dbReference>
<dbReference type="InterPro" id="IPR038071">
    <property type="entry name" value="UROD/MetE-like_sf"/>
</dbReference>
<dbReference type="NCBIfam" id="TIGR01371">
    <property type="entry name" value="met_syn_B12ind"/>
    <property type="match status" value="1"/>
</dbReference>
<dbReference type="NCBIfam" id="NF003556">
    <property type="entry name" value="PRK05222.1"/>
    <property type="match status" value="1"/>
</dbReference>
<dbReference type="PANTHER" id="PTHR30519">
    <property type="entry name" value="5-METHYLTETRAHYDROPTEROYLTRIGLUTAMATE--HOMOCYSTEINE METHYLTRANSFERASE"/>
    <property type="match status" value="1"/>
</dbReference>
<dbReference type="Pfam" id="PF08267">
    <property type="entry name" value="Meth_synt_1"/>
    <property type="match status" value="1"/>
</dbReference>
<dbReference type="Pfam" id="PF01717">
    <property type="entry name" value="Meth_synt_2"/>
    <property type="match status" value="1"/>
</dbReference>
<dbReference type="PIRSF" id="PIRSF000382">
    <property type="entry name" value="MeTrfase_B12_ind"/>
    <property type="match status" value="1"/>
</dbReference>
<dbReference type="SUPFAM" id="SSF51726">
    <property type="entry name" value="UROD/MetE-like"/>
    <property type="match status" value="2"/>
</dbReference>
<proteinExistence type="inferred from homology"/>
<accession>Q2FJQ7</accession>